<sequence length="347" mass="37258">MTAEKSKALAAALAQIEKQFGKGSIMRMGDGEAAEDIQVVSTGSLGLDIALGVGGLPRGRVVEIYGPESSGKTTLTLQVIAELQKLGGTAAFIDAEHALDVQYAAKLGVNVPELLISQPDTGEQALEITDALVRSGSIDMIVIDSVAALVPKAEIEGEMGDSLPGLQARLMSQALRKLTGTIKRTNCLVIFINQIRMKIGVMFGNPETTTGGNALKFYSSVRLDIRRIGSIKKNDEVIGNETRVKVVKNKVSPPFREAIFDILYGEGISRQGEIIDLGVQAKIVDKAGAWYSYNGEKIGQGKDNAREFLRENPEIAREIENRIRESLGVVAMPDGAGNEAEAMDEEE</sequence>
<accession>P0C7V2</accession>
<accession>P19690</accession>
<accession>P77821</accession>
<accession>Q93LP3</accession>
<proteinExistence type="inferred from homology"/>
<keyword id="KW-0067">ATP-binding</keyword>
<keyword id="KW-0963">Cytoplasm</keyword>
<keyword id="KW-0227">DNA damage</keyword>
<keyword id="KW-0233">DNA recombination</keyword>
<keyword id="KW-0234">DNA repair</keyword>
<keyword id="KW-0238">DNA-binding</keyword>
<keyword id="KW-0547">Nucleotide-binding</keyword>
<keyword id="KW-0742">SOS response</keyword>
<gene>
    <name evidence="1" type="primary">recA</name>
</gene>
<comment type="function">
    <text evidence="1">Can catalyze the hydrolysis of ATP in the presence of single-stranded DNA, the ATP-dependent uptake of single-stranded DNA by duplex DNA, and the ATP-dependent hybridization of homologous single-stranded DNAs. It interacts with LexA causing its activation and leading to its autocatalytic cleavage.</text>
</comment>
<comment type="subcellular location">
    <subcellularLocation>
        <location evidence="1">Cytoplasm</location>
    </subcellularLocation>
</comment>
<comment type="similarity">
    <text evidence="1">Belongs to the RecA family.</text>
</comment>
<name>RECA_BURCE</name>
<dbReference type="EMBL" id="D90120">
    <property type="protein sequence ID" value="BAA14148.1"/>
    <property type="molecule type" value="Genomic_DNA"/>
</dbReference>
<dbReference type="EMBL" id="AY036066">
    <property type="protein sequence ID" value="AAK64608.1"/>
    <property type="molecule type" value="Genomic_DNA"/>
</dbReference>
<dbReference type="PIR" id="JQ0459">
    <property type="entry name" value="RQPSAC"/>
</dbReference>
<dbReference type="SMR" id="P0C7V2"/>
<dbReference type="STRING" id="292.WI67_14230"/>
<dbReference type="eggNOG" id="COG0468">
    <property type="taxonomic scope" value="Bacteria"/>
</dbReference>
<dbReference type="GO" id="GO:0005829">
    <property type="term" value="C:cytosol"/>
    <property type="evidence" value="ECO:0007669"/>
    <property type="project" value="TreeGrafter"/>
</dbReference>
<dbReference type="GO" id="GO:0005524">
    <property type="term" value="F:ATP binding"/>
    <property type="evidence" value="ECO:0007669"/>
    <property type="project" value="UniProtKB-UniRule"/>
</dbReference>
<dbReference type="GO" id="GO:0016887">
    <property type="term" value="F:ATP hydrolysis activity"/>
    <property type="evidence" value="ECO:0007669"/>
    <property type="project" value="InterPro"/>
</dbReference>
<dbReference type="GO" id="GO:0140664">
    <property type="term" value="F:ATP-dependent DNA damage sensor activity"/>
    <property type="evidence" value="ECO:0007669"/>
    <property type="project" value="InterPro"/>
</dbReference>
<dbReference type="GO" id="GO:0003684">
    <property type="term" value="F:damaged DNA binding"/>
    <property type="evidence" value="ECO:0007669"/>
    <property type="project" value="UniProtKB-UniRule"/>
</dbReference>
<dbReference type="GO" id="GO:0003697">
    <property type="term" value="F:single-stranded DNA binding"/>
    <property type="evidence" value="ECO:0007669"/>
    <property type="project" value="UniProtKB-UniRule"/>
</dbReference>
<dbReference type="GO" id="GO:0006310">
    <property type="term" value="P:DNA recombination"/>
    <property type="evidence" value="ECO:0007669"/>
    <property type="project" value="UniProtKB-UniRule"/>
</dbReference>
<dbReference type="GO" id="GO:0006281">
    <property type="term" value="P:DNA repair"/>
    <property type="evidence" value="ECO:0007669"/>
    <property type="project" value="UniProtKB-UniRule"/>
</dbReference>
<dbReference type="GO" id="GO:0009432">
    <property type="term" value="P:SOS response"/>
    <property type="evidence" value="ECO:0007669"/>
    <property type="project" value="UniProtKB-UniRule"/>
</dbReference>
<dbReference type="CDD" id="cd00983">
    <property type="entry name" value="RecA"/>
    <property type="match status" value="1"/>
</dbReference>
<dbReference type="FunFam" id="3.40.50.300:FF:000087">
    <property type="entry name" value="Recombinase RecA"/>
    <property type="match status" value="1"/>
</dbReference>
<dbReference type="Gene3D" id="3.40.50.300">
    <property type="entry name" value="P-loop containing nucleotide triphosphate hydrolases"/>
    <property type="match status" value="1"/>
</dbReference>
<dbReference type="HAMAP" id="MF_00268">
    <property type="entry name" value="RecA"/>
    <property type="match status" value="1"/>
</dbReference>
<dbReference type="InterPro" id="IPR003593">
    <property type="entry name" value="AAA+_ATPase"/>
</dbReference>
<dbReference type="InterPro" id="IPR013765">
    <property type="entry name" value="DNA_recomb/repair_RecA"/>
</dbReference>
<dbReference type="InterPro" id="IPR020584">
    <property type="entry name" value="DNA_recomb/repair_RecA_CS"/>
</dbReference>
<dbReference type="InterPro" id="IPR027417">
    <property type="entry name" value="P-loop_NTPase"/>
</dbReference>
<dbReference type="InterPro" id="IPR049261">
    <property type="entry name" value="RecA-like_C"/>
</dbReference>
<dbReference type="InterPro" id="IPR049428">
    <property type="entry name" value="RecA-like_N"/>
</dbReference>
<dbReference type="InterPro" id="IPR020588">
    <property type="entry name" value="RecA_ATP-bd"/>
</dbReference>
<dbReference type="InterPro" id="IPR023400">
    <property type="entry name" value="RecA_C_sf"/>
</dbReference>
<dbReference type="InterPro" id="IPR020587">
    <property type="entry name" value="RecA_monomer-monomer_interface"/>
</dbReference>
<dbReference type="NCBIfam" id="TIGR02012">
    <property type="entry name" value="tigrfam_recA"/>
    <property type="match status" value="1"/>
</dbReference>
<dbReference type="PANTHER" id="PTHR45900:SF1">
    <property type="entry name" value="MITOCHONDRIAL DNA REPAIR PROTEIN RECA HOMOLOG-RELATED"/>
    <property type="match status" value="1"/>
</dbReference>
<dbReference type="PANTHER" id="PTHR45900">
    <property type="entry name" value="RECA"/>
    <property type="match status" value="1"/>
</dbReference>
<dbReference type="Pfam" id="PF00154">
    <property type="entry name" value="RecA"/>
    <property type="match status" value="1"/>
</dbReference>
<dbReference type="Pfam" id="PF21096">
    <property type="entry name" value="RecA_C"/>
    <property type="match status" value="1"/>
</dbReference>
<dbReference type="PRINTS" id="PR00142">
    <property type="entry name" value="RECA"/>
</dbReference>
<dbReference type="SMART" id="SM00382">
    <property type="entry name" value="AAA"/>
    <property type="match status" value="1"/>
</dbReference>
<dbReference type="SUPFAM" id="SSF52540">
    <property type="entry name" value="P-loop containing nucleoside triphosphate hydrolases"/>
    <property type="match status" value="1"/>
</dbReference>
<dbReference type="SUPFAM" id="SSF54752">
    <property type="entry name" value="RecA protein, C-terminal domain"/>
    <property type="match status" value="1"/>
</dbReference>
<dbReference type="PROSITE" id="PS00321">
    <property type="entry name" value="RECA_1"/>
    <property type="match status" value="1"/>
</dbReference>
<dbReference type="PROSITE" id="PS50162">
    <property type="entry name" value="RECA_2"/>
    <property type="match status" value="1"/>
</dbReference>
<dbReference type="PROSITE" id="PS50163">
    <property type="entry name" value="RECA_3"/>
    <property type="match status" value="1"/>
</dbReference>
<reference key="1">
    <citation type="journal article" date="1990" name="Gene">
        <title>Cloning, sequencing, and transcriptional analysis of the recA gene of Pseudomonas cepacia.</title>
        <authorList>
            <person name="Nakazawa T."/>
            <person name="Kimoto M."/>
            <person name="Abe M."/>
        </authorList>
    </citation>
    <scope>NUCLEOTIDE SEQUENCE [GENOMIC DNA]</scope>
    <source>
        <strain>JN25</strain>
    </source>
</reference>
<reference key="2">
    <citation type="journal article" date="2001" name="Appl. Environ. Microbiol.">
        <title>Requirement of DNA repair mechanisms for survival of Burkholderia cepacia G4 upon degradation of trichloroethylene.</title>
        <authorList>
            <person name="Yeager C.M."/>
            <person name="Bottomley P.J."/>
            <person name="Arp D.J."/>
        </authorList>
    </citation>
    <scope>NUCLEOTIDE SEQUENCE [GENOMIC DNA]</scope>
    <source>
        <strain>G4</strain>
    </source>
</reference>
<protein>
    <recommendedName>
        <fullName evidence="1">Protein RecA</fullName>
    </recommendedName>
    <alternativeName>
        <fullName evidence="1">Recombinase A</fullName>
    </alternativeName>
</protein>
<evidence type="ECO:0000255" key="1">
    <source>
        <dbReference type="HAMAP-Rule" id="MF_00268"/>
    </source>
</evidence>
<evidence type="ECO:0000305" key="2"/>
<organism>
    <name type="scientific">Burkholderia cepacia</name>
    <name type="common">Pseudomonas cepacia</name>
    <dbReference type="NCBI Taxonomy" id="292"/>
    <lineage>
        <taxon>Bacteria</taxon>
        <taxon>Pseudomonadati</taxon>
        <taxon>Pseudomonadota</taxon>
        <taxon>Betaproteobacteria</taxon>
        <taxon>Burkholderiales</taxon>
        <taxon>Burkholderiaceae</taxon>
        <taxon>Burkholderia</taxon>
        <taxon>Burkholderia cepacia complex</taxon>
    </lineage>
</organism>
<feature type="chain" id="PRO_0000122673" description="Protein RecA">
    <location>
        <begin position="1"/>
        <end position="347"/>
    </location>
</feature>
<feature type="binding site" evidence="1">
    <location>
        <begin position="66"/>
        <end position="73"/>
    </location>
    <ligand>
        <name>ATP</name>
        <dbReference type="ChEBI" id="CHEBI:30616"/>
    </ligand>
</feature>
<feature type="sequence conflict" description="In Ref. 2; AAK64608." evidence="2" ref="2">
    <original>EAA</original>
    <variation>DVK</variation>
    <location>
        <begin position="32"/>
        <end position="34"/>
    </location>
</feature>
<feature type="sequence conflict" description="In Ref. 2; AAK64608." evidence="2" ref="2">
    <original>AGN</original>
    <variation>VVD</variation>
    <location>
        <begin position="336"/>
        <end position="338"/>
    </location>
</feature>